<reference key="1">
    <citation type="journal article" date="2011" name="Appl. Environ. Microbiol.">
        <title>Genomic potential of Marinobacter aquaeolei, a biogeochemical 'opportunitroph'.</title>
        <authorList>
            <person name="Singer E."/>
            <person name="Webb E.A."/>
            <person name="Nelson W.C."/>
            <person name="Heidelberg J.F."/>
            <person name="Ivanova N."/>
            <person name="Pati A."/>
            <person name="Edwards K.J."/>
        </authorList>
    </citation>
    <scope>NUCLEOTIDE SEQUENCE [LARGE SCALE GENOMIC DNA]</scope>
    <source>
        <strain>ATCC 700491 / DSM 11845 / VT8</strain>
    </source>
</reference>
<accession>A1TYW8</accession>
<comment type="function">
    <text evidence="1">Catalyzes the reversible interconversion of serine and glycine with tetrahydrofolate (THF) serving as the one-carbon carrier. This reaction serves as the major source of one-carbon groups required for the biosynthesis of purines, thymidylate, methionine, and other important biomolecules. Also exhibits THF-independent aldolase activity toward beta-hydroxyamino acids, producing glycine and aldehydes, via a retro-aldol mechanism.</text>
</comment>
<comment type="catalytic activity">
    <reaction evidence="1">
        <text>(6R)-5,10-methylene-5,6,7,8-tetrahydrofolate + glycine + H2O = (6S)-5,6,7,8-tetrahydrofolate + L-serine</text>
        <dbReference type="Rhea" id="RHEA:15481"/>
        <dbReference type="ChEBI" id="CHEBI:15377"/>
        <dbReference type="ChEBI" id="CHEBI:15636"/>
        <dbReference type="ChEBI" id="CHEBI:33384"/>
        <dbReference type="ChEBI" id="CHEBI:57305"/>
        <dbReference type="ChEBI" id="CHEBI:57453"/>
        <dbReference type="EC" id="2.1.2.1"/>
    </reaction>
</comment>
<comment type="cofactor">
    <cofactor evidence="1">
        <name>pyridoxal 5'-phosphate</name>
        <dbReference type="ChEBI" id="CHEBI:597326"/>
    </cofactor>
</comment>
<comment type="pathway">
    <text evidence="1">One-carbon metabolism; tetrahydrofolate interconversion.</text>
</comment>
<comment type="pathway">
    <text evidence="1">Amino-acid biosynthesis; glycine biosynthesis; glycine from L-serine: step 1/1.</text>
</comment>
<comment type="subunit">
    <text evidence="1">Homodimer.</text>
</comment>
<comment type="subcellular location">
    <subcellularLocation>
        <location evidence="1">Cytoplasm</location>
    </subcellularLocation>
</comment>
<comment type="similarity">
    <text evidence="1">Belongs to the SHMT family.</text>
</comment>
<dbReference type="EC" id="2.1.2.1" evidence="1"/>
<dbReference type="EMBL" id="CP000514">
    <property type="protein sequence ID" value="ABM17937.1"/>
    <property type="molecule type" value="Genomic_DNA"/>
</dbReference>
<dbReference type="RefSeq" id="WP_011784359.1">
    <property type="nucleotide sequence ID" value="NC_008740.1"/>
</dbReference>
<dbReference type="SMR" id="A1TYW8"/>
<dbReference type="STRING" id="351348.Maqu_0841"/>
<dbReference type="KEGG" id="maq:Maqu_0841"/>
<dbReference type="eggNOG" id="COG0112">
    <property type="taxonomic scope" value="Bacteria"/>
</dbReference>
<dbReference type="HOGENOM" id="CLU_022477_2_1_6"/>
<dbReference type="OrthoDB" id="9803846at2"/>
<dbReference type="UniPathway" id="UPA00193"/>
<dbReference type="UniPathway" id="UPA00288">
    <property type="reaction ID" value="UER01023"/>
</dbReference>
<dbReference type="Proteomes" id="UP000000998">
    <property type="component" value="Chromosome"/>
</dbReference>
<dbReference type="GO" id="GO:0005829">
    <property type="term" value="C:cytosol"/>
    <property type="evidence" value="ECO:0007669"/>
    <property type="project" value="TreeGrafter"/>
</dbReference>
<dbReference type="GO" id="GO:0004372">
    <property type="term" value="F:glycine hydroxymethyltransferase activity"/>
    <property type="evidence" value="ECO:0007669"/>
    <property type="project" value="UniProtKB-UniRule"/>
</dbReference>
<dbReference type="GO" id="GO:0030170">
    <property type="term" value="F:pyridoxal phosphate binding"/>
    <property type="evidence" value="ECO:0007669"/>
    <property type="project" value="UniProtKB-UniRule"/>
</dbReference>
<dbReference type="GO" id="GO:0019264">
    <property type="term" value="P:glycine biosynthetic process from serine"/>
    <property type="evidence" value="ECO:0007669"/>
    <property type="project" value="UniProtKB-UniRule"/>
</dbReference>
<dbReference type="GO" id="GO:0035999">
    <property type="term" value="P:tetrahydrofolate interconversion"/>
    <property type="evidence" value="ECO:0007669"/>
    <property type="project" value="UniProtKB-UniRule"/>
</dbReference>
<dbReference type="CDD" id="cd00378">
    <property type="entry name" value="SHMT"/>
    <property type="match status" value="1"/>
</dbReference>
<dbReference type="FunFam" id="3.40.640.10:FF:000001">
    <property type="entry name" value="Serine hydroxymethyltransferase"/>
    <property type="match status" value="1"/>
</dbReference>
<dbReference type="FunFam" id="3.90.1150.10:FF:000003">
    <property type="entry name" value="Serine hydroxymethyltransferase"/>
    <property type="match status" value="1"/>
</dbReference>
<dbReference type="Gene3D" id="3.90.1150.10">
    <property type="entry name" value="Aspartate Aminotransferase, domain 1"/>
    <property type="match status" value="1"/>
</dbReference>
<dbReference type="Gene3D" id="3.40.640.10">
    <property type="entry name" value="Type I PLP-dependent aspartate aminotransferase-like (Major domain)"/>
    <property type="match status" value="1"/>
</dbReference>
<dbReference type="HAMAP" id="MF_00051">
    <property type="entry name" value="SHMT"/>
    <property type="match status" value="1"/>
</dbReference>
<dbReference type="InterPro" id="IPR015424">
    <property type="entry name" value="PyrdxlP-dep_Trfase"/>
</dbReference>
<dbReference type="InterPro" id="IPR015421">
    <property type="entry name" value="PyrdxlP-dep_Trfase_major"/>
</dbReference>
<dbReference type="InterPro" id="IPR015422">
    <property type="entry name" value="PyrdxlP-dep_Trfase_small"/>
</dbReference>
<dbReference type="InterPro" id="IPR001085">
    <property type="entry name" value="Ser_HO-MeTrfase"/>
</dbReference>
<dbReference type="InterPro" id="IPR049943">
    <property type="entry name" value="Ser_HO-MeTrfase-like"/>
</dbReference>
<dbReference type="InterPro" id="IPR019798">
    <property type="entry name" value="Ser_HO-MeTrfase_PLP_BS"/>
</dbReference>
<dbReference type="InterPro" id="IPR039429">
    <property type="entry name" value="SHMT-like_dom"/>
</dbReference>
<dbReference type="NCBIfam" id="NF000586">
    <property type="entry name" value="PRK00011.1"/>
    <property type="match status" value="1"/>
</dbReference>
<dbReference type="PANTHER" id="PTHR11680">
    <property type="entry name" value="SERINE HYDROXYMETHYLTRANSFERASE"/>
    <property type="match status" value="1"/>
</dbReference>
<dbReference type="PANTHER" id="PTHR11680:SF50">
    <property type="entry name" value="SERINE HYDROXYMETHYLTRANSFERASE"/>
    <property type="match status" value="1"/>
</dbReference>
<dbReference type="Pfam" id="PF00464">
    <property type="entry name" value="SHMT"/>
    <property type="match status" value="1"/>
</dbReference>
<dbReference type="PIRSF" id="PIRSF000412">
    <property type="entry name" value="SHMT"/>
    <property type="match status" value="1"/>
</dbReference>
<dbReference type="SUPFAM" id="SSF53383">
    <property type="entry name" value="PLP-dependent transferases"/>
    <property type="match status" value="1"/>
</dbReference>
<dbReference type="PROSITE" id="PS00096">
    <property type="entry name" value="SHMT"/>
    <property type="match status" value="1"/>
</dbReference>
<proteinExistence type="inferred from homology"/>
<gene>
    <name evidence="1" type="primary">glyA</name>
    <name type="ordered locus">Maqu_0841</name>
</gene>
<evidence type="ECO:0000255" key="1">
    <source>
        <dbReference type="HAMAP-Rule" id="MF_00051"/>
    </source>
</evidence>
<feature type="chain" id="PRO_1000006280" description="Serine hydroxymethyltransferase">
    <location>
        <begin position="1"/>
        <end position="417"/>
    </location>
</feature>
<feature type="binding site" evidence="1">
    <location>
        <position position="121"/>
    </location>
    <ligand>
        <name>(6S)-5,6,7,8-tetrahydrofolate</name>
        <dbReference type="ChEBI" id="CHEBI:57453"/>
    </ligand>
</feature>
<feature type="binding site" evidence="1">
    <location>
        <begin position="125"/>
        <end position="127"/>
    </location>
    <ligand>
        <name>(6S)-5,6,7,8-tetrahydrofolate</name>
        <dbReference type="ChEBI" id="CHEBI:57453"/>
    </ligand>
</feature>
<feature type="binding site" evidence="1">
    <location>
        <begin position="355"/>
        <end position="357"/>
    </location>
    <ligand>
        <name>(6S)-5,6,7,8-tetrahydrofolate</name>
        <dbReference type="ChEBI" id="CHEBI:57453"/>
    </ligand>
</feature>
<feature type="site" description="Plays an important role in substrate specificity" evidence="1">
    <location>
        <position position="229"/>
    </location>
</feature>
<feature type="modified residue" description="N6-(pyridoxal phosphate)lysine" evidence="1">
    <location>
        <position position="230"/>
    </location>
</feature>
<protein>
    <recommendedName>
        <fullName evidence="1">Serine hydroxymethyltransferase</fullName>
        <shortName evidence="1">SHMT</shortName>
        <shortName evidence="1">Serine methylase</shortName>
        <ecNumber evidence="1">2.1.2.1</ecNumber>
    </recommendedName>
</protein>
<keyword id="KW-0028">Amino-acid biosynthesis</keyword>
<keyword id="KW-0963">Cytoplasm</keyword>
<keyword id="KW-0554">One-carbon metabolism</keyword>
<keyword id="KW-0663">Pyridoxal phosphate</keyword>
<keyword id="KW-0808">Transferase</keyword>
<sequence>MFTRDMKIAGFDDELWNAMQAEEKRQEAHIELIASENYTSPRVMEAQGSVLTNKYAEGYPGKRYYGGCEFVDIAEDLAIARAKELFGAAYANVQPHSGSQANSAVFMALLKPGDTVLGMSLAHGGHLTHGASVNFSGKIYSAVQYGLNPETGLIDYDEVEALAVEHKPKMIIAGFSAYSQELDFARFRAIADKVGAYLFVDMAHVAGLVAAGVYPDPVPHAHVVATTTHKTLRGPRGGLILACDDEDLQKKLNSAVFPGGQGGPLMHVIAAKAVCFKEAMSDEFKAYQQQVVKNAAAMAEVFIERGFDVVSGGTKNHLFLVSLIKQDITGKDADAALGKAHITVNKNAVPNDPRSPFVTSGLRIGTPAVTTRGFKEAECRNLAGWMCDILDNLEDEAVNSRVREQVEAVCARFPVYG</sequence>
<name>GLYA_MARN8</name>
<organism>
    <name type="scientific">Marinobacter nauticus (strain ATCC 700491 / DSM 11845 / VT8)</name>
    <name type="common">Marinobacter aquaeolei</name>
    <dbReference type="NCBI Taxonomy" id="351348"/>
    <lineage>
        <taxon>Bacteria</taxon>
        <taxon>Pseudomonadati</taxon>
        <taxon>Pseudomonadota</taxon>
        <taxon>Gammaproteobacteria</taxon>
        <taxon>Pseudomonadales</taxon>
        <taxon>Marinobacteraceae</taxon>
        <taxon>Marinobacter</taxon>
    </lineage>
</organism>